<gene>
    <name type="primary">NUF2</name>
    <name type="ordered locus">CNA06580</name>
</gene>
<name>NUF2_CRYNJ</name>
<accession>P0CP40</accession>
<accession>Q55Z49</accession>
<accession>Q5KNG4</accession>
<feature type="chain" id="PRO_0000246649" description="Probable kinetochore protein NUF2">
    <location>
        <begin position="1"/>
        <end position="450"/>
    </location>
</feature>
<feature type="coiled-coil region" evidence="2">
    <location>
        <begin position="142"/>
        <end position="232"/>
    </location>
</feature>
<feature type="coiled-coil region" evidence="2">
    <location>
        <begin position="265"/>
        <end position="414"/>
    </location>
</feature>
<evidence type="ECO:0000250" key="1"/>
<evidence type="ECO:0000255" key="2"/>
<evidence type="ECO:0000305" key="3"/>
<protein>
    <recommendedName>
        <fullName>Probable kinetochore protein NUF2</fullName>
    </recommendedName>
</protein>
<organism>
    <name type="scientific">Cryptococcus neoformans var. neoformans serotype D (strain JEC21 / ATCC MYA-565)</name>
    <name type="common">Filobasidiella neoformans</name>
    <dbReference type="NCBI Taxonomy" id="214684"/>
    <lineage>
        <taxon>Eukaryota</taxon>
        <taxon>Fungi</taxon>
        <taxon>Dikarya</taxon>
        <taxon>Basidiomycota</taxon>
        <taxon>Agaricomycotina</taxon>
        <taxon>Tremellomycetes</taxon>
        <taxon>Tremellales</taxon>
        <taxon>Cryptococcaceae</taxon>
        <taxon>Cryptococcus</taxon>
        <taxon>Cryptococcus neoformans species complex</taxon>
    </lineage>
</organism>
<dbReference type="EMBL" id="AE017341">
    <property type="protein sequence ID" value="AAW41179.2"/>
    <property type="molecule type" value="Genomic_DNA"/>
</dbReference>
<dbReference type="RefSeq" id="XP_566998.1">
    <property type="nucleotide sequence ID" value="XM_566998.1"/>
</dbReference>
<dbReference type="SMR" id="P0CP40"/>
<dbReference type="FunCoup" id="P0CP40">
    <property type="interactions" value="70"/>
</dbReference>
<dbReference type="STRING" id="214684.P0CP40"/>
<dbReference type="PaxDb" id="214684-P0CP40"/>
<dbReference type="eggNOG" id="KOG4438">
    <property type="taxonomic scope" value="Eukaryota"/>
</dbReference>
<dbReference type="InParanoid" id="P0CP40"/>
<dbReference type="Proteomes" id="UP000002149">
    <property type="component" value="Chromosome 1"/>
</dbReference>
<dbReference type="GO" id="GO:0031262">
    <property type="term" value="C:Ndc80 complex"/>
    <property type="evidence" value="ECO:0000250"/>
    <property type="project" value="UniProtKB"/>
</dbReference>
<dbReference type="GO" id="GO:0005634">
    <property type="term" value="C:nucleus"/>
    <property type="evidence" value="ECO:0007669"/>
    <property type="project" value="UniProtKB-SubCell"/>
</dbReference>
<dbReference type="GO" id="GO:0008017">
    <property type="term" value="F:microtubule binding"/>
    <property type="evidence" value="ECO:0000250"/>
    <property type="project" value="UniProtKB"/>
</dbReference>
<dbReference type="GO" id="GO:0044877">
    <property type="term" value="F:protein-containing complex binding"/>
    <property type="evidence" value="ECO:0000318"/>
    <property type="project" value="GO_Central"/>
</dbReference>
<dbReference type="GO" id="GO:0051315">
    <property type="term" value="P:attachment of mitotic spindle microtubules to kinetochore"/>
    <property type="evidence" value="ECO:0000318"/>
    <property type="project" value="GO_Central"/>
</dbReference>
<dbReference type="GO" id="GO:0051301">
    <property type="term" value="P:cell division"/>
    <property type="evidence" value="ECO:0007669"/>
    <property type="project" value="UniProtKB-KW"/>
</dbReference>
<dbReference type="GO" id="GO:0051383">
    <property type="term" value="P:kinetochore organization"/>
    <property type="evidence" value="ECO:0000318"/>
    <property type="project" value="GO_Central"/>
</dbReference>
<dbReference type="GO" id="GO:0045132">
    <property type="term" value="P:meiotic chromosome segregation"/>
    <property type="evidence" value="ECO:0000318"/>
    <property type="project" value="GO_Central"/>
</dbReference>
<dbReference type="GO" id="GO:0007052">
    <property type="term" value="P:mitotic spindle organization"/>
    <property type="evidence" value="ECO:0000318"/>
    <property type="project" value="GO_Central"/>
</dbReference>
<dbReference type="Gene3D" id="1.10.418.60">
    <property type="entry name" value="Ncd80 complex, Nuf2 subunit"/>
    <property type="match status" value="1"/>
</dbReference>
<dbReference type="InterPro" id="IPR005549">
    <property type="entry name" value="Kinetochore_Nuf2_N"/>
</dbReference>
<dbReference type="InterPro" id="IPR041112">
    <property type="entry name" value="Nuf2_DHR10-like"/>
</dbReference>
<dbReference type="InterPro" id="IPR038275">
    <property type="entry name" value="Nuf2_N_sf"/>
</dbReference>
<dbReference type="PANTHER" id="PTHR21650:SF2">
    <property type="entry name" value="KINETOCHORE PROTEIN NUF2"/>
    <property type="match status" value="1"/>
</dbReference>
<dbReference type="PANTHER" id="PTHR21650">
    <property type="entry name" value="MEMBRALIN/KINETOCHORE PROTEIN NUF2"/>
    <property type="match status" value="1"/>
</dbReference>
<dbReference type="Pfam" id="PF03800">
    <property type="entry name" value="Nuf2"/>
    <property type="match status" value="1"/>
</dbReference>
<dbReference type="Pfam" id="PF18595">
    <property type="entry name" value="Nuf2_DHR10-like"/>
    <property type="match status" value="1"/>
</dbReference>
<keyword id="KW-0131">Cell cycle</keyword>
<keyword id="KW-0132">Cell division</keyword>
<keyword id="KW-0137">Centromere</keyword>
<keyword id="KW-0158">Chromosome</keyword>
<keyword id="KW-0175">Coiled coil</keyword>
<keyword id="KW-0995">Kinetochore</keyword>
<keyword id="KW-0498">Mitosis</keyword>
<keyword id="KW-0539">Nucleus</keyword>
<keyword id="KW-1185">Reference proteome</keyword>
<proteinExistence type="inferred from homology"/>
<reference key="1">
    <citation type="journal article" date="2005" name="Science">
        <title>The genome of the basidiomycetous yeast and human pathogen Cryptococcus neoformans.</title>
        <authorList>
            <person name="Loftus B.J."/>
            <person name="Fung E."/>
            <person name="Roncaglia P."/>
            <person name="Rowley D."/>
            <person name="Amedeo P."/>
            <person name="Bruno D."/>
            <person name="Vamathevan J."/>
            <person name="Miranda M."/>
            <person name="Anderson I.J."/>
            <person name="Fraser J.A."/>
            <person name="Allen J.E."/>
            <person name="Bosdet I.E."/>
            <person name="Brent M.R."/>
            <person name="Chiu R."/>
            <person name="Doering T.L."/>
            <person name="Donlin M.J."/>
            <person name="D'Souza C.A."/>
            <person name="Fox D.S."/>
            <person name="Grinberg V."/>
            <person name="Fu J."/>
            <person name="Fukushima M."/>
            <person name="Haas B.J."/>
            <person name="Huang J.C."/>
            <person name="Janbon G."/>
            <person name="Jones S.J.M."/>
            <person name="Koo H.L."/>
            <person name="Krzywinski M.I."/>
            <person name="Kwon-Chung K.J."/>
            <person name="Lengeler K.B."/>
            <person name="Maiti R."/>
            <person name="Marra M.A."/>
            <person name="Marra R.E."/>
            <person name="Mathewson C.A."/>
            <person name="Mitchell T.G."/>
            <person name="Pertea M."/>
            <person name="Riggs F.R."/>
            <person name="Salzberg S.L."/>
            <person name="Schein J.E."/>
            <person name="Shvartsbeyn A."/>
            <person name="Shin H."/>
            <person name="Shumway M."/>
            <person name="Specht C.A."/>
            <person name="Suh B.B."/>
            <person name="Tenney A."/>
            <person name="Utterback T.R."/>
            <person name="Wickes B.L."/>
            <person name="Wortman J.R."/>
            <person name="Wye N.H."/>
            <person name="Kronstad J.W."/>
            <person name="Lodge J.K."/>
            <person name="Heitman J."/>
            <person name="Davis R.W."/>
            <person name="Fraser C.M."/>
            <person name="Hyman R.W."/>
        </authorList>
    </citation>
    <scope>NUCLEOTIDE SEQUENCE [LARGE SCALE GENOMIC DNA]</scope>
    <source>
        <strain>JEC21 / ATCC MYA-565</strain>
    </source>
</reference>
<comment type="function">
    <text evidence="1">Acts as a component of the essential kinetochore-associated NDC80 complex, which is required for chromosome segregation and spindle checkpoint activity.</text>
</comment>
<comment type="subunit">
    <text evidence="1">Component of the NDC80 complex, which consists of at least NDC80, NUF2 and SPC25.</text>
</comment>
<comment type="subcellular location">
    <subcellularLocation>
        <location evidence="1">Nucleus</location>
    </subcellularLocation>
    <subcellularLocation>
        <location evidence="1">Chromosome</location>
        <location evidence="1">Centromere</location>
        <location evidence="1">Kinetochore</location>
    </subcellularLocation>
    <text evidence="1">Associated with kinetochores.</text>
</comment>
<comment type="similarity">
    <text evidence="3">Belongs to the NUF2 family.</text>
</comment>
<sequence>MSQQNRRVQQNTAAFPLLTAHDILECLAALDIPAQMEDLTKPTAQSTQSIYGSLLEVLMGASINSIEGPKQALLGMMEYKEMYSDTLQFMMFFKHCRRLALLCGIPDFAISDLARPDANRLRKVLSGIMNFAKFRDERMQTQARFQENLQKHQKKAVDLRRKTEELETQFQEITARNAAERPQSEQAQKRNELLKSELLELNSQRLKEVQEYEELKKERQTLLEQVNHNNRIVTQLELQIGSAKSRLVQSPDRIKRHISEMSFAIQSEKAKLASFQQKARELTNRLEVIGALEVDLRGLIDLEHSIQDQRAKTEEAKRSKSALEARLEGRQIESQGLAAKLEQLQRQLQNASHKLARQEETRKGMRERGARRIDELKAEYKVRARERGEWQKQRDDLLAEQKELESEMAAFVTKHENEINEFLHAYWTMRRQAEDYMNTMTVKLGLQVQL</sequence>